<accession>Q92C29</accession>
<organism>
    <name type="scientific">Listeria innocua serovar 6a (strain ATCC BAA-680 / CLIP 11262)</name>
    <dbReference type="NCBI Taxonomy" id="272626"/>
    <lineage>
        <taxon>Bacteria</taxon>
        <taxon>Bacillati</taxon>
        <taxon>Bacillota</taxon>
        <taxon>Bacilli</taxon>
        <taxon>Bacillales</taxon>
        <taxon>Listeriaceae</taxon>
        <taxon>Listeria</taxon>
    </lineage>
</organism>
<comment type="function">
    <text evidence="2">One of the essential components for the initiation of protein synthesis. Protects formylmethionyl-tRNA from spontaneous hydrolysis and promotes its binding to the 30S ribosomal subunits. Also involved in the hydrolysis of GTP during the formation of the 70S ribosomal complex.</text>
</comment>
<comment type="subcellular location">
    <subcellularLocation>
        <location evidence="2">Cytoplasm</location>
    </subcellularLocation>
</comment>
<comment type="similarity">
    <text evidence="2">Belongs to the TRAFAC class translation factor GTPase superfamily. Classic translation factor GTPase family. IF-2 subfamily.</text>
</comment>
<keyword id="KW-0963">Cytoplasm</keyword>
<keyword id="KW-0342">GTP-binding</keyword>
<keyword id="KW-0396">Initiation factor</keyword>
<keyword id="KW-0547">Nucleotide-binding</keyword>
<keyword id="KW-0648">Protein biosynthesis</keyword>
<sequence length="782" mass="84977">MSKVRVYEYAKEHQVSSKKVIEALKDLGIEVANHMSTINENALRQLDNAIDGTNKKAEAPKKETTSNENGNSKGPNKPNMTNSNEKSNKPNKPAGQANKPATANKSHGAKPATNKPANTSNQTQSSGNKQPAGGQKRNNNNNSNRPGGGNPNRPGGNNRPNRGGNFNNKGRNTKKKGKLNHSTVPPTPPKPKELPEKIVFSESLTVAELAKKLYREPSELIKKLFMLGVVATINQSLDKDAIELICDDYGVQVEEEIKVDVTDLDVYFENELNEAVDESKLVERPPVVTIMGHVDHGKTTLLDSLRNTKVTLGEAGGITQHIGAYQLEIHDKKITFLDTPGHAAFTAMRARGAQITDITILVVAADDGVMPQTIEAINHAKAAGMPIIVAVNKIDKPQANPDRVMQELTEYELVPEAWGGDTIFAPISAKFGEGLENLLDMILLVSEVEELKANPDRRAIGSVIEAELDKGRGPVATLLVQDGTLNIGDPIVVGNTFGRVRAMVNDLGRRVKKVGPSTPVEITGLNDVPQAGDRFVVFEDEKTARNIGETRASRALVAQRSATNRVSLDNLFEHMKAGEMKEVNVIIKADVQGSVEALAASLRKIDVEGVNVKIIHTAVGAINESDITLAAASNAIIIGFNVRPTTQAREAAENESVDIRLHRVIYKAIDEIEAAMKGMLDPEFQEKIIGQAQVRQTINVSKVGTIAGCYVTDGKITRDSGVRIIRDGIVVFEGEIATLKRFKDDAKEVAKGYECGITVQNFNDIKEDDVIEAYVMEEIERK</sequence>
<gene>
    <name evidence="2" type="primary">infB</name>
    <name type="ordered locus">lin1362</name>
</gene>
<reference key="1">
    <citation type="journal article" date="2001" name="Science">
        <title>Comparative genomics of Listeria species.</title>
        <authorList>
            <person name="Glaser P."/>
            <person name="Frangeul L."/>
            <person name="Buchrieser C."/>
            <person name="Rusniok C."/>
            <person name="Amend A."/>
            <person name="Baquero F."/>
            <person name="Berche P."/>
            <person name="Bloecker H."/>
            <person name="Brandt P."/>
            <person name="Chakraborty T."/>
            <person name="Charbit A."/>
            <person name="Chetouani F."/>
            <person name="Couve E."/>
            <person name="de Daruvar A."/>
            <person name="Dehoux P."/>
            <person name="Domann E."/>
            <person name="Dominguez-Bernal G."/>
            <person name="Duchaud E."/>
            <person name="Durant L."/>
            <person name="Dussurget O."/>
            <person name="Entian K.-D."/>
            <person name="Fsihi H."/>
            <person name="Garcia-del Portillo F."/>
            <person name="Garrido P."/>
            <person name="Gautier L."/>
            <person name="Goebel W."/>
            <person name="Gomez-Lopez N."/>
            <person name="Hain T."/>
            <person name="Hauf J."/>
            <person name="Jackson D."/>
            <person name="Jones L.-M."/>
            <person name="Kaerst U."/>
            <person name="Kreft J."/>
            <person name="Kuhn M."/>
            <person name="Kunst F."/>
            <person name="Kurapkat G."/>
            <person name="Madueno E."/>
            <person name="Maitournam A."/>
            <person name="Mata Vicente J."/>
            <person name="Ng E."/>
            <person name="Nedjari H."/>
            <person name="Nordsiek G."/>
            <person name="Novella S."/>
            <person name="de Pablos B."/>
            <person name="Perez-Diaz J.-C."/>
            <person name="Purcell R."/>
            <person name="Remmel B."/>
            <person name="Rose M."/>
            <person name="Schlueter T."/>
            <person name="Simoes N."/>
            <person name="Tierrez A."/>
            <person name="Vazquez-Boland J.-A."/>
            <person name="Voss H."/>
            <person name="Wehland J."/>
            <person name="Cossart P."/>
        </authorList>
    </citation>
    <scope>NUCLEOTIDE SEQUENCE [LARGE SCALE GENOMIC DNA]</scope>
    <source>
        <strain>ATCC BAA-680 / CLIP 11262</strain>
    </source>
</reference>
<name>IF2_LISIN</name>
<dbReference type="EMBL" id="AL596168">
    <property type="protein sequence ID" value="CAC96593.1"/>
    <property type="molecule type" value="Genomic_DNA"/>
</dbReference>
<dbReference type="PIR" id="AI1602">
    <property type="entry name" value="AI1602"/>
</dbReference>
<dbReference type="RefSeq" id="WP_010991496.1">
    <property type="nucleotide sequence ID" value="NC_003212.1"/>
</dbReference>
<dbReference type="SMR" id="Q92C29"/>
<dbReference type="STRING" id="272626.gene:17565693"/>
<dbReference type="GeneID" id="93234742"/>
<dbReference type="KEGG" id="lin:infB"/>
<dbReference type="eggNOG" id="COG0532">
    <property type="taxonomic scope" value="Bacteria"/>
</dbReference>
<dbReference type="HOGENOM" id="CLU_006301_5_1_9"/>
<dbReference type="OrthoDB" id="9811804at2"/>
<dbReference type="Proteomes" id="UP000002513">
    <property type="component" value="Chromosome"/>
</dbReference>
<dbReference type="GO" id="GO:0005829">
    <property type="term" value="C:cytosol"/>
    <property type="evidence" value="ECO:0007669"/>
    <property type="project" value="TreeGrafter"/>
</dbReference>
<dbReference type="GO" id="GO:0005525">
    <property type="term" value="F:GTP binding"/>
    <property type="evidence" value="ECO:0007669"/>
    <property type="project" value="UniProtKB-KW"/>
</dbReference>
<dbReference type="GO" id="GO:0003924">
    <property type="term" value="F:GTPase activity"/>
    <property type="evidence" value="ECO:0007669"/>
    <property type="project" value="UniProtKB-UniRule"/>
</dbReference>
<dbReference type="GO" id="GO:0003743">
    <property type="term" value="F:translation initiation factor activity"/>
    <property type="evidence" value="ECO:0007669"/>
    <property type="project" value="UniProtKB-UniRule"/>
</dbReference>
<dbReference type="CDD" id="cd01887">
    <property type="entry name" value="IF2_eIF5B"/>
    <property type="match status" value="1"/>
</dbReference>
<dbReference type="CDD" id="cd03702">
    <property type="entry name" value="IF2_mtIF2_II"/>
    <property type="match status" value="1"/>
</dbReference>
<dbReference type="CDD" id="cd03692">
    <property type="entry name" value="mtIF2_IVc"/>
    <property type="match status" value="1"/>
</dbReference>
<dbReference type="FunFam" id="2.40.30.10:FF:000007">
    <property type="entry name" value="Translation initiation factor IF-2"/>
    <property type="match status" value="1"/>
</dbReference>
<dbReference type="FunFam" id="2.40.30.10:FF:000008">
    <property type="entry name" value="Translation initiation factor IF-2"/>
    <property type="match status" value="1"/>
</dbReference>
<dbReference type="FunFam" id="3.40.50.10050:FF:000001">
    <property type="entry name" value="Translation initiation factor IF-2"/>
    <property type="match status" value="1"/>
</dbReference>
<dbReference type="FunFam" id="3.40.50.300:FF:000019">
    <property type="entry name" value="Translation initiation factor IF-2"/>
    <property type="match status" value="1"/>
</dbReference>
<dbReference type="Gene3D" id="1.10.10.2480">
    <property type="match status" value="1"/>
</dbReference>
<dbReference type="Gene3D" id="3.40.50.300">
    <property type="entry name" value="P-loop containing nucleotide triphosphate hydrolases"/>
    <property type="match status" value="1"/>
</dbReference>
<dbReference type="Gene3D" id="2.40.30.10">
    <property type="entry name" value="Translation factors"/>
    <property type="match status" value="2"/>
</dbReference>
<dbReference type="Gene3D" id="3.40.50.10050">
    <property type="entry name" value="Translation initiation factor IF- 2, domain 3"/>
    <property type="match status" value="1"/>
</dbReference>
<dbReference type="HAMAP" id="MF_00100_B">
    <property type="entry name" value="IF_2_B"/>
    <property type="match status" value="1"/>
</dbReference>
<dbReference type="InterPro" id="IPR053905">
    <property type="entry name" value="EF-G-like_DII"/>
</dbReference>
<dbReference type="InterPro" id="IPR044145">
    <property type="entry name" value="IF2_II"/>
</dbReference>
<dbReference type="InterPro" id="IPR006847">
    <property type="entry name" value="IF2_N"/>
</dbReference>
<dbReference type="InterPro" id="IPR027417">
    <property type="entry name" value="P-loop_NTPase"/>
</dbReference>
<dbReference type="InterPro" id="IPR005225">
    <property type="entry name" value="Small_GTP-bd"/>
</dbReference>
<dbReference type="InterPro" id="IPR000795">
    <property type="entry name" value="T_Tr_GTP-bd_dom"/>
</dbReference>
<dbReference type="InterPro" id="IPR000178">
    <property type="entry name" value="TF_IF2_bacterial-like"/>
</dbReference>
<dbReference type="InterPro" id="IPR015760">
    <property type="entry name" value="TIF_IF2"/>
</dbReference>
<dbReference type="InterPro" id="IPR023115">
    <property type="entry name" value="TIF_IF2_dom3"/>
</dbReference>
<dbReference type="InterPro" id="IPR036925">
    <property type="entry name" value="TIF_IF2_dom3_sf"/>
</dbReference>
<dbReference type="InterPro" id="IPR009000">
    <property type="entry name" value="Transl_B-barrel_sf"/>
</dbReference>
<dbReference type="NCBIfam" id="TIGR00487">
    <property type="entry name" value="IF-2"/>
    <property type="match status" value="1"/>
</dbReference>
<dbReference type="NCBIfam" id="TIGR00231">
    <property type="entry name" value="small_GTP"/>
    <property type="match status" value="1"/>
</dbReference>
<dbReference type="PANTHER" id="PTHR43381:SF5">
    <property type="entry name" value="TR-TYPE G DOMAIN-CONTAINING PROTEIN"/>
    <property type="match status" value="1"/>
</dbReference>
<dbReference type="PANTHER" id="PTHR43381">
    <property type="entry name" value="TRANSLATION INITIATION FACTOR IF-2-RELATED"/>
    <property type="match status" value="1"/>
</dbReference>
<dbReference type="Pfam" id="PF22042">
    <property type="entry name" value="EF-G_D2"/>
    <property type="match status" value="1"/>
</dbReference>
<dbReference type="Pfam" id="PF00009">
    <property type="entry name" value="GTP_EFTU"/>
    <property type="match status" value="1"/>
</dbReference>
<dbReference type="Pfam" id="PF11987">
    <property type="entry name" value="IF-2"/>
    <property type="match status" value="1"/>
</dbReference>
<dbReference type="Pfam" id="PF04760">
    <property type="entry name" value="IF2_N"/>
    <property type="match status" value="2"/>
</dbReference>
<dbReference type="SUPFAM" id="SSF52156">
    <property type="entry name" value="Initiation factor IF2/eIF5b, domain 3"/>
    <property type="match status" value="1"/>
</dbReference>
<dbReference type="SUPFAM" id="SSF52540">
    <property type="entry name" value="P-loop containing nucleoside triphosphate hydrolases"/>
    <property type="match status" value="1"/>
</dbReference>
<dbReference type="SUPFAM" id="SSF50447">
    <property type="entry name" value="Translation proteins"/>
    <property type="match status" value="2"/>
</dbReference>
<dbReference type="PROSITE" id="PS51722">
    <property type="entry name" value="G_TR_2"/>
    <property type="match status" value="1"/>
</dbReference>
<dbReference type="PROSITE" id="PS01176">
    <property type="entry name" value="IF2"/>
    <property type="match status" value="1"/>
</dbReference>
<proteinExistence type="inferred from homology"/>
<feature type="chain" id="PRO_0000137217" description="Translation initiation factor IF-2">
    <location>
        <begin position="1"/>
        <end position="782"/>
    </location>
</feature>
<feature type="domain" description="tr-type G">
    <location>
        <begin position="283"/>
        <end position="452"/>
    </location>
</feature>
<feature type="region of interest" description="Disordered" evidence="3">
    <location>
        <begin position="47"/>
        <end position="196"/>
    </location>
</feature>
<feature type="region of interest" description="G1" evidence="1">
    <location>
        <begin position="292"/>
        <end position="299"/>
    </location>
</feature>
<feature type="region of interest" description="G2" evidence="1">
    <location>
        <begin position="317"/>
        <end position="321"/>
    </location>
</feature>
<feature type="region of interest" description="G3" evidence="1">
    <location>
        <begin position="338"/>
        <end position="341"/>
    </location>
</feature>
<feature type="region of interest" description="G4" evidence="1">
    <location>
        <begin position="392"/>
        <end position="395"/>
    </location>
</feature>
<feature type="region of interest" description="G5" evidence="1">
    <location>
        <begin position="428"/>
        <end position="430"/>
    </location>
</feature>
<feature type="compositionally biased region" description="Basic and acidic residues" evidence="3">
    <location>
        <begin position="53"/>
        <end position="65"/>
    </location>
</feature>
<feature type="compositionally biased region" description="Polar residues" evidence="3">
    <location>
        <begin position="66"/>
        <end position="81"/>
    </location>
</feature>
<feature type="compositionally biased region" description="Low complexity" evidence="3">
    <location>
        <begin position="82"/>
        <end position="93"/>
    </location>
</feature>
<feature type="compositionally biased region" description="Polar residues" evidence="3">
    <location>
        <begin position="115"/>
        <end position="129"/>
    </location>
</feature>
<feature type="compositionally biased region" description="Low complexity" evidence="3">
    <location>
        <begin position="133"/>
        <end position="170"/>
    </location>
</feature>
<feature type="binding site" evidence="2">
    <location>
        <begin position="292"/>
        <end position="299"/>
    </location>
    <ligand>
        <name>GTP</name>
        <dbReference type="ChEBI" id="CHEBI:37565"/>
    </ligand>
</feature>
<feature type="binding site" evidence="2">
    <location>
        <begin position="338"/>
        <end position="342"/>
    </location>
    <ligand>
        <name>GTP</name>
        <dbReference type="ChEBI" id="CHEBI:37565"/>
    </ligand>
</feature>
<feature type="binding site" evidence="2">
    <location>
        <begin position="392"/>
        <end position="395"/>
    </location>
    <ligand>
        <name>GTP</name>
        <dbReference type="ChEBI" id="CHEBI:37565"/>
    </ligand>
</feature>
<evidence type="ECO:0000250" key="1"/>
<evidence type="ECO:0000255" key="2">
    <source>
        <dbReference type="HAMAP-Rule" id="MF_00100"/>
    </source>
</evidence>
<evidence type="ECO:0000256" key="3">
    <source>
        <dbReference type="SAM" id="MobiDB-lite"/>
    </source>
</evidence>
<protein>
    <recommendedName>
        <fullName evidence="2">Translation initiation factor IF-2</fullName>
    </recommendedName>
</protein>